<sequence length="171" mass="19847">MNKFLFFIFVFVGISFAGDDTATKDYDIVWRTINFAIFFGILFYLIKGPIKNAYNARINRISSRLEAIQTKLKESKEKKEASKKNLEDVKQKCVELIETAKKEAIQLDEKIQQSAQIDIAQMQKSFAEQKEFEIRRLKKSVTAEILDELFNEKSVNLSQNELINLVQKKVV</sequence>
<accession>A7I173</accession>
<comment type="function">
    <text evidence="1">F(1)F(0) ATP synthase produces ATP from ADP in the presence of a proton or sodium gradient. F-type ATPases consist of two structural domains, F(1) containing the extramembraneous catalytic core and F(0) containing the membrane proton channel, linked together by a central stalk and a peripheral stalk. During catalysis, ATP synthesis in the catalytic domain of F(1) is coupled via a rotary mechanism of the central stalk subunits to proton translocation.</text>
</comment>
<comment type="function">
    <text evidence="1">Component of the F(0) channel, it forms part of the peripheral stalk, linking F(1) to F(0).</text>
</comment>
<comment type="subunit">
    <text evidence="1">F-type ATPases have 2 components, F(1) - the catalytic core - and F(0) - the membrane proton channel. F(1) has five subunits: alpha(3), beta(3), gamma(1), delta(1), epsilon(1). F(0) has three main subunits: a(1), b(2) and c(10-14). The alpha and beta chains form an alternating ring which encloses part of the gamma chain. F(1) is attached to F(0) by a central stalk formed by the gamma and epsilon chains, while a peripheral stalk is formed by the delta and b chains.</text>
</comment>
<comment type="subcellular location">
    <subcellularLocation>
        <location evidence="1">Cell inner membrane</location>
        <topology evidence="1">Single-pass membrane protein</topology>
    </subcellularLocation>
</comment>
<comment type="similarity">
    <text evidence="1">Belongs to the ATPase B chain family.</text>
</comment>
<protein>
    <recommendedName>
        <fullName evidence="1">ATP synthase subunit b</fullName>
    </recommendedName>
    <alternativeName>
        <fullName evidence="1">ATP synthase F(0) sector subunit b</fullName>
    </alternativeName>
    <alternativeName>
        <fullName evidence="1">ATPase subunit I</fullName>
    </alternativeName>
    <alternativeName>
        <fullName evidence="1">F-type ATPase subunit b</fullName>
        <shortName evidence="1">F-ATPase subunit b</shortName>
    </alternativeName>
</protein>
<keyword id="KW-0066">ATP synthesis</keyword>
<keyword id="KW-0997">Cell inner membrane</keyword>
<keyword id="KW-1003">Cell membrane</keyword>
<keyword id="KW-0138">CF(0)</keyword>
<keyword id="KW-0375">Hydrogen ion transport</keyword>
<keyword id="KW-0406">Ion transport</keyword>
<keyword id="KW-0472">Membrane</keyword>
<keyword id="KW-1185">Reference proteome</keyword>
<keyword id="KW-0812">Transmembrane</keyword>
<keyword id="KW-1133">Transmembrane helix</keyword>
<keyword id="KW-0813">Transport</keyword>
<gene>
    <name evidence="1" type="primary">atpF</name>
    <name type="ordered locus">CHAB381_0683</name>
</gene>
<dbReference type="EMBL" id="CP000776">
    <property type="protein sequence ID" value="ABS51698.1"/>
    <property type="molecule type" value="Genomic_DNA"/>
</dbReference>
<dbReference type="RefSeq" id="WP_012108551.1">
    <property type="nucleotide sequence ID" value="NC_009714.1"/>
</dbReference>
<dbReference type="SMR" id="A7I173"/>
<dbReference type="STRING" id="360107.CHAB381_0683"/>
<dbReference type="KEGG" id="cha:CHAB381_0683"/>
<dbReference type="eggNOG" id="COG0711">
    <property type="taxonomic scope" value="Bacteria"/>
</dbReference>
<dbReference type="HOGENOM" id="CLU_129781_0_0_7"/>
<dbReference type="OrthoDB" id="5373033at2"/>
<dbReference type="Proteomes" id="UP000002407">
    <property type="component" value="Chromosome"/>
</dbReference>
<dbReference type="GO" id="GO:0005886">
    <property type="term" value="C:plasma membrane"/>
    <property type="evidence" value="ECO:0007669"/>
    <property type="project" value="UniProtKB-SubCell"/>
</dbReference>
<dbReference type="GO" id="GO:0045259">
    <property type="term" value="C:proton-transporting ATP synthase complex"/>
    <property type="evidence" value="ECO:0007669"/>
    <property type="project" value="UniProtKB-KW"/>
</dbReference>
<dbReference type="GO" id="GO:0046933">
    <property type="term" value="F:proton-transporting ATP synthase activity, rotational mechanism"/>
    <property type="evidence" value="ECO:0007669"/>
    <property type="project" value="UniProtKB-UniRule"/>
</dbReference>
<dbReference type="CDD" id="cd06503">
    <property type="entry name" value="ATP-synt_Fo_b"/>
    <property type="match status" value="1"/>
</dbReference>
<dbReference type="HAMAP" id="MF_01398">
    <property type="entry name" value="ATP_synth_b_bprime"/>
    <property type="match status" value="1"/>
</dbReference>
<dbReference type="InterPro" id="IPR002146">
    <property type="entry name" value="ATP_synth_b/b'su_bac/chlpt"/>
</dbReference>
<dbReference type="NCBIfam" id="NF006292">
    <property type="entry name" value="PRK08475.1"/>
    <property type="match status" value="1"/>
</dbReference>
<dbReference type="Pfam" id="PF00430">
    <property type="entry name" value="ATP-synt_B"/>
    <property type="match status" value="1"/>
</dbReference>
<reference key="1">
    <citation type="submission" date="2007-07" db="EMBL/GenBank/DDBJ databases">
        <title>Complete genome sequence of Campylobacter hominis ATCC BAA-381, a commensal isolated from the human gastrointestinal tract.</title>
        <authorList>
            <person name="Fouts D.E."/>
            <person name="Mongodin E.F."/>
            <person name="Puiu D."/>
            <person name="Sebastian Y."/>
            <person name="Miller W.G."/>
            <person name="Mandrell R.E."/>
            <person name="Nelson K.E."/>
        </authorList>
    </citation>
    <scope>NUCLEOTIDE SEQUENCE [LARGE SCALE GENOMIC DNA]</scope>
    <source>
        <strain>ATCC BAA-381 / DSM 21671 / CCUG 45161 / LMG 19568 / NCTC 13146 / CH001A</strain>
    </source>
</reference>
<name>ATPF_CAMHC</name>
<evidence type="ECO:0000255" key="1">
    <source>
        <dbReference type="HAMAP-Rule" id="MF_01398"/>
    </source>
</evidence>
<organism>
    <name type="scientific">Campylobacter hominis (strain ATCC BAA-381 / DSM 21671 / CCUG 45161 / LMG 19568 / NCTC 13146 / CH001A)</name>
    <dbReference type="NCBI Taxonomy" id="360107"/>
    <lineage>
        <taxon>Bacteria</taxon>
        <taxon>Pseudomonadati</taxon>
        <taxon>Campylobacterota</taxon>
        <taxon>Epsilonproteobacteria</taxon>
        <taxon>Campylobacterales</taxon>
        <taxon>Campylobacteraceae</taxon>
        <taxon>Campylobacter</taxon>
    </lineage>
</organism>
<proteinExistence type="inferred from homology"/>
<feature type="chain" id="PRO_0000368402" description="ATP synthase subunit b">
    <location>
        <begin position="1"/>
        <end position="171"/>
    </location>
</feature>
<feature type="transmembrane region" description="Helical" evidence="1">
    <location>
        <begin position="3"/>
        <end position="23"/>
    </location>
</feature>